<dbReference type="EMBL" id="CP001601">
    <property type="protein sequence ID" value="ACP32658.1"/>
    <property type="molecule type" value="Genomic_DNA"/>
</dbReference>
<dbReference type="RefSeq" id="WP_010187085.1">
    <property type="nucleotide sequence ID" value="NZ_ACLH01000006.1"/>
</dbReference>
<dbReference type="SMR" id="C3PFQ4"/>
<dbReference type="STRING" id="548476.cauri_1063"/>
<dbReference type="GeneID" id="31923685"/>
<dbReference type="KEGG" id="car:cauri_1063"/>
<dbReference type="eggNOG" id="COG0216">
    <property type="taxonomic scope" value="Bacteria"/>
</dbReference>
<dbReference type="HOGENOM" id="CLU_036856_0_1_11"/>
<dbReference type="OrthoDB" id="9806673at2"/>
<dbReference type="Proteomes" id="UP000002077">
    <property type="component" value="Chromosome"/>
</dbReference>
<dbReference type="GO" id="GO:0005737">
    <property type="term" value="C:cytoplasm"/>
    <property type="evidence" value="ECO:0007669"/>
    <property type="project" value="UniProtKB-SubCell"/>
</dbReference>
<dbReference type="GO" id="GO:0016149">
    <property type="term" value="F:translation release factor activity, codon specific"/>
    <property type="evidence" value="ECO:0007669"/>
    <property type="project" value="UniProtKB-UniRule"/>
</dbReference>
<dbReference type="FunFam" id="3.30.160.20:FF:000004">
    <property type="entry name" value="Peptide chain release factor 1"/>
    <property type="match status" value="1"/>
</dbReference>
<dbReference type="Gene3D" id="3.30.160.20">
    <property type="match status" value="1"/>
</dbReference>
<dbReference type="Gene3D" id="3.30.70.1660">
    <property type="match status" value="1"/>
</dbReference>
<dbReference type="Gene3D" id="6.10.140.1950">
    <property type="match status" value="1"/>
</dbReference>
<dbReference type="HAMAP" id="MF_00093">
    <property type="entry name" value="Rel_fac_1"/>
    <property type="match status" value="1"/>
</dbReference>
<dbReference type="InterPro" id="IPR005139">
    <property type="entry name" value="PCRF"/>
</dbReference>
<dbReference type="InterPro" id="IPR000352">
    <property type="entry name" value="Pep_chain_release_fac_I"/>
</dbReference>
<dbReference type="InterPro" id="IPR045853">
    <property type="entry name" value="Pep_chain_release_fac_I_sf"/>
</dbReference>
<dbReference type="InterPro" id="IPR050057">
    <property type="entry name" value="Prokaryotic/Mito_RF"/>
</dbReference>
<dbReference type="InterPro" id="IPR004373">
    <property type="entry name" value="RF-1"/>
</dbReference>
<dbReference type="NCBIfam" id="TIGR00019">
    <property type="entry name" value="prfA"/>
    <property type="match status" value="1"/>
</dbReference>
<dbReference type="NCBIfam" id="NF001859">
    <property type="entry name" value="PRK00591.1"/>
    <property type="match status" value="1"/>
</dbReference>
<dbReference type="PANTHER" id="PTHR43804">
    <property type="entry name" value="LD18447P"/>
    <property type="match status" value="1"/>
</dbReference>
<dbReference type="PANTHER" id="PTHR43804:SF7">
    <property type="entry name" value="LD18447P"/>
    <property type="match status" value="1"/>
</dbReference>
<dbReference type="Pfam" id="PF03462">
    <property type="entry name" value="PCRF"/>
    <property type="match status" value="1"/>
</dbReference>
<dbReference type="Pfam" id="PF00472">
    <property type="entry name" value="RF-1"/>
    <property type="match status" value="1"/>
</dbReference>
<dbReference type="SMART" id="SM00937">
    <property type="entry name" value="PCRF"/>
    <property type="match status" value="1"/>
</dbReference>
<dbReference type="SUPFAM" id="SSF75620">
    <property type="entry name" value="Release factor"/>
    <property type="match status" value="1"/>
</dbReference>
<dbReference type="PROSITE" id="PS00745">
    <property type="entry name" value="RF_PROK_I"/>
    <property type="match status" value="1"/>
</dbReference>
<sequence>MSNQVSLVDDIISEYQGIEMQMADPEVAGDQSQFRKLSKRYAELRPIVAVNEELVQARQDLADAKEMAYEDHEFQSEVDRLEPLVVQLEEQLADLLAPRDEHDSEDIIMEIKAGAGGEEAALFAGDLARMYERFADKAGFQWEVLGLNESDLGGVKDMSISFKSKTPSRDGAWSVFKFEGGVHRVQRVPVTESQGRIQTSAAGVLVYPEPEEIDSVNIDDKDIRVDVYRSSGKGGQGVNTTDSAVRITHLPTGLVVTCQKERSQIQNKARALQVLQARLDQMEREAREAEAGEQRASQVRTMDRSERIRTYNWPENRITDHRIGYKANNLDSVLDGDMQDLIEALQAQERAERLEAEG</sequence>
<accession>C3PFQ4</accession>
<reference key="1">
    <citation type="journal article" date="2010" name="BMC Genomics">
        <title>Complete genome sequence and lifestyle of black-pigmented Corynebacterium aurimucosum ATCC 700975 (formerly C. nigricans CN-1) isolated from a vaginal swab of a woman with spontaneous abortion.</title>
        <authorList>
            <person name="Trost E."/>
            <person name="Gotker S."/>
            <person name="Schneider J."/>
            <person name="Schneiker-Bekel S."/>
            <person name="Szczepanowski R."/>
            <person name="Tilker A."/>
            <person name="Viehoever P."/>
            <person name="Arnold W."/>
            <person name="Bekel T."/>
            <person name="Blom J."/>
            <person name="Gartemann K.H."/>
            <person name="Linke B."/>
            <person name="Goesmann A."/>
            <person name="Puhler A."/>
            <person name="Shukla S.K."/>
            <person name="Tauch A."/>
        </authorList>
    </citation>
    <scope>NUCLEOTIDE SEQUENCE [LARGE SCALE GENOMIC DNA]</scope>
    <source>
        <strain>ATCC 700975 / DSM 44827 / CIP 107346 / CN-1</strain>
    </source>
</reference>
<name>RF1_CORA7</name>
<organism>
    <name type="scientific">Corynebacterium aurimucosum (strain ATCC 700975 / DSM 44827 / CIP 107346 / CN-1)</name>
    <name type="common">Corynebacterium nigricans</name>
    <dbReference type="NCBI Taxonomy" id="548476"/>
    <lineage>
        <taxon>Bacteria</taxon>
        <taxon>Bacillati</taxon>
        <taxon>Actinomycetota</taxon>
        <taxon>Actinomycetes</taxon>
        <taxon>Mycobacteriales</taxon>
        <taxon>Corynebacteriaceae</taxon>
        <taxon>Corynebacterium</taxon>
    </lineage>
</organism>
<protein>
    <recommendedName>
        <fullName evidence="1">Peptide chain release factor 1</fullName>
        <shortName evidence="1">RF-1</shortName>
    </recommendedName>
</protein>
<keyword id="KW-0963">Cytoplasm</keyword>
<keyword id="KW-0488">Methylation</keyword>
<keyword id="KW-0648">Protein biosynthesis</keyword>
<keyword id="KW-1185">Reference proteome</keyword>
<proteinExistence type="inferred from homology"/>
<evidence type="ECO:0000255" key="1">
    <source>
        <dbReference type="HAMAP-Rule" id="MF_00093"/>
    </source>
</evidence>
<comment type="function">
    <text evidence="1">Peptide chain release factor 1 directs the termination of translation in response to the peptide chain termination codons UAG and UAA.</text>
</comment>
<comment type="subcellular location">
    <subcellularLocation>
        <location evidence="1">Cytoplasm</location>
    </subcellularLocation>
</comment>
<comment type="PTM">
    <text evidence="1">Methylated by PrmC. Methylation increases the termination efficiency of RF1.</text>
</comment>
<comment type="similarity">
    <text evidence="1">Belongs to the prokaryotic/mitochondrial release factor family.</text>
</comment>
<gene>
    <name evidence="1" type="primary">prfA</name>
    <name type="ordered locus">cauri_1063</name>
</gene>
<feature type="chain" id="PRO_1000193483" description="Peptide chain release factor 1">
    <location>
        <begin position="1"/>
        <end position="358"/>
    </location>
</feature>
<feature type="modified residue" description="N5-methylglutamine" evidence="1">
    <location>
        <position position="236"/>
    </location>
</feature>